<name>YPEL1_CHLAE</name>
<accession>Q65Z59</accession>
<protein>
    <recommendedName>
        <fullName>Protein yippee-like 1</fullName>
    </recommendedName>
</protein>
<feature type="chain" id="PRO_0000212380" description="Protein yippee-like 1">
    <location>
        <begin position="1"/>
        <end position="119"/>
    </location>
</feature>
<feature type="domain" description="Yippee" evidence="3">
    <location>
        <begin position="19"/>
        <end position="116"/>
    </location>
</feature>
<feature type="short sequence motif" description="Nuclear localization signal" evidence="2">
    <location>
        <begin position="99"/>
        <end position="104"/>
    </location>
</feature>
<feature type="binding site" evidence="3">
    <location>
        <position position="23"/>
    </location>
    <ligand>
        <name>Zn(2+)</name>
        <dbReference type="ChEBI" id="CHEBI:29105"/>
    </ligand>
</feature>
<feature type="binding site" evidence="3">
    <location>
        <position position="26"/>
    </location>
    <ligand>
        <name>Zn(2+)</name>
        <dbReference type="ChEBI" id="CHEBI:29105"/>
    </ligand>
</feature>
<feature type="binding site" evidence="3">
    <location>
        <position position="79"/>
    </location>
    <ligand>
        <name>Zn(2+)</name>
        <dbReference type="ChEBI" id="CHEBI:29105"/>
    </ligand>
</feature>
<feature type="binding site" evidence="3">
    <location>
        <position position="82"/>
    </location>
    <ligand>
        <name>Zn(2+)</name>
        <dbReference type="ChEBI" id="CHEBI:29105"/>
    </ligand>
</feature>
<dbReference type="EMBL" id="AB160977">
    <property type="protein sequence ID" value="BAD51386.1"/>
    <property type="molecule type" value="mRNA"/>
</dbReference>
<dbReference type="SMR" id="Q65Z59"/>
<dbReference type="GO" id="GO:0005634">
    <property type="term" value="C:nucleus"/>
    <property type="evidence" value="ECO:0007669"/>
    <property type="project" value="UniProtKB-SubCell"/>
</dbReference>
<dbReference type="GO" id="GO:0046872">
    <property type="term" value="F:metal ion binding"/>
    <property type="evidence" value="ECO:0007669"/>
    <property type="project" value="UniProtKB-KW"/>
</dbReference>
<dbReference type="InterPro" id="IPR034751">
    <property type="entry name" value="Yippee"/>
</dbReference>
<dbReference type="InterPro" id="IPR004910">
    <property type="entry name" value="Yippee/Mis18/Cereblon"/>
</dbReference>
<dbReference type="InterPro" id="IPR039058">
    <property type="entry name" value="Yippee_fam"/>
</dbReference>
<dbReference type="PANTHER" id="PTHR13848">
    <property type="entry name" value="PROTEIN YIPPEE-LIKE CG15309-RELATED"/>
    <property type="match status" value="1"/>
</dbReference>
<dbReference type="Pfam" id="PF03226">
    <property type="entry name" value="Yippee-Mis18"/>
    <property type="match status" value="1"/>
</dbReference>
<dbReference type="PROSITE" id="PS51792">
    <property type="entry name" value="YIPPEE"/>
    <property type="match status" value="1"/>
</dbReference>
<comment type="function">
    <text>May play a role in epithelioid conversion of fibroblasts.</text>
</comment>
<comment type="subcellular location">
    <subcellularLocation>
        <location evidence="1">Nucleus</location>
    </subcellularLocation>
</comment>
<comment type="similarity">
    <text evidence="4">Belongs to the yippee family.</text>
</comment>
<keyword id="KW-0479">Metal-binding</keyword>
<keyword id="KW-0539">Nucleus</keyword>
<keyword id="KW-0862">Zinc</keyword>
<proteinExistence type="inferred from homology"/>
<sequence>MVKMTKSKTFQAYLPNCHRTYSCIHCRAHLANHDELISKSFQGSQGRAYLFNSVVNVGCGPAEERVLLTGLHAVADIYCENCKTTLGWKYEHAFESSQKYKEGKFIIELAHMIKDNGWE</sequence>
<organism>
    <name type="scientific">Chlorocebus aethiops</name>
    <name type="common">Green monkey</name>
    <name type="synonym">Cercopithecus aethiops</name>
    <dbReference type="NCBI Taxonomy" id="9534"/>
    <lineage>
        <taxon>Eukaryota</taxon>
        <taxon>Metazoa</taxon>
        <taxon>Chordata</taxon>
        <taxon>Craniata</taxon>
        <taxon>Vertebrata</taxon>
        <taxon>Euteleostomi</taxon>
        <taxon>Mammalia</taxon>
        <taxon>Eutheria</taxon>
        <taxon>Euarchontoglires</taxon>
        <taxon>Primates</taxon>
        <taxon>Haplorrhini</taxon>
        <taxon>Catarrhini</taxon>
        <taxon>Cercopithecidae</taxon>
        <taxon>Cercopithecinae</taxon>
        <taxon>Chlorocebus</taxon>
    </lineage>
</organism>
<reference key="1">
    <citation type="journal article" date="2004" name="Gene">
        <title>Identification and characterization of a novel gene family YPEL in a wide spectrum of eukaryotic species.</title>
        <authorList>
            <person name="Hosono K."/>
            <person name="Sasaki T."/>
            <person name="Minoshima S."/>
            <person name="Shimizu N."/>
        </authorList>
    </citation>
    <scope>NUCLEOTIDE SEQUENCE [MRNA]</scope>
</reference>
<gene>
    <name type="primary">YPEL1</name>
</gene>
<evidence type="ECO:0000250" key="1"/>
<evidence type="ECO:0000255" key="2"/>
<evidence type="ECO:0000255" key="3">
    <source>
        <dbReference type="PROSITE-ProRule" id="PRU01128"/>
    </source>
</evidence>
<evidence type="ECO:0000305" key="4"/>